<organism>
    <name type="scientific">Saccharomyces cerevisiae (strain ATCC 204508 / S288c)</name>
    <name type="common">Baker's yeast</name>
    <dbReference type="NCBI Taxonomy" id="559292"/>
    <lineage>
        <taxon>Eukaryota</taxon>
        <taxon>Fungi</taxon>
        <taxon>Dikarya</taxon>
        <taxon>Ascomycota</taxon>
        <taxon>Saccharomycotina</taxon>
        <taxon>Saccharomycetes</taxon>
        <taxon>Saccharomycetales</taxon>
        <taxon>Saccharomycetaceae</taxon>
        <taxon>Saccharomyces</taxon>
    </lineage>
</organism>
<evidence type="ECO:0000269" key="1">
    <source>
    </source>
</evidence>
<evidence type="ECO:0000269" key="2">
    <source>
    </source>
</evidence>
<evidence type="ECO:0000269" key="3">
    <source>
    </source>
</evidence>
<evidence type="ECO:0000269" key="4">
    <source>
    </source>
</evidence>
<evidence type="ECO:0000269" key="5">
    <source>
    </source>
</evidence>
<evidence type="ECO:0000269" key="6">
    <source>
    </source>
</evidence>
<evidence type="ECO:0000303" key="7">
    <source>
    </source>
</evidence>
<evidence type="ECO:0000305" key="8"/>
<evidence type="ECO:0000305" key="9">
    <source>
    </source>
</evidence>
<evidence type="ECO:0000305" key="10">
    <source>
    </source>
</evidence>
<comment type="function">
    <text evidence="9 10">Component of the mitochondrial ribosome (mitoribosome), a dedicated translation machinery responsible for the synthesis of mitochondrial genome-encoded proteins, including at least some of the essential transmembrane subunits of the mitochondrial respiratory chain. The mitoribosomes are attached to the mitochondrial inner membrane and translation products are cotranslationally integrated into the membrane.</text>
</comment>
<comment type="subunit">
    <text evidence="4 5">Component of the mitochondrial large ribosomal subunit (mt-LSU). Mature yeast 74S mitochondrial ribosomes consist of a small (37S) and a large (54S) subunit. The 37S small subunit contains a 15S ribosomal RNA (15S mt-rRNA) and 34 different proteins. The 54S large subunit contains a 21S rRNA (21S mt-rRNA) and 46 different proteins. bL33m stabilizes the tRNA acceptor stem in the E-site.</text>
</comment>
<comment type="subcellular location">
    <subcellularLocation>
        <location evidence="1 3">Mitochondrion</location>
    </subcellularLocation>
    <text evidence="6">Mitoribosomes are tethered to the mitochondrial inner membrane and spatially aligned with the membrane insertion machinery through two distinct membrane contact sites, formed by the 21S rRNA expansion segment 96-ES1 and the inner membrane protein MBA1.</text>
</comment>
<comment type="miscellaneous">
    <text evidence="2">Present with 2500 molecules/cell in log phase SD medium.</text>
</comment>
<comment type="similarity">
    <text evidence="8">Belongs to the bacterial ribosomal protein bL33 family.</text>
</comment>
<gene>
    <name type="primary">MRPL39</name>
    <name type="ordered locus">YML009C</name>
    <name type="ORF">YM9571.09C</name>
</gene>
<sequence>MVKVKSKNSVIKLLSTAASGYSRYISIKKGAPLVTQVRYDPVVKRHVLFKEAKKRKVAERKPLDFLRTAK</sequence>
<accession>P36533</accession>
<accession>D6VZG5</accession>
<proteinExistence type="evidence at protein level"/>
<protein>
    <recommendedName>
        <fullName evidence="7">Large ribosomal subunit protein bL33m</fullName>
    </recommendedName>
    <alternativeName>
        <fullName>54S ribosomal protein L39, mitochondrial</fullName>
    </alternativeName>
    <alternativeName>
        <fullName>YmL39</fullName>
    </alternativeName>
</protein>
<reference key="1">
    <citation type="journal article" date="1997" name="Nature">
        <title>The nucleotide sequence of Saccharomyces cerevisiae chromosome XIII.</title>
        <authorList>
            <person name="Bowman S."/>
            <person name="Churcher C.M."/>
            <person name="Badcock K."/>
            <person name="Brown D."/>
            <person name="Chillingworth T."/>
            <person name="Connor R."/>
            <person name="Dedman K."/>
            <person name="Devlin K."/>
            <person name="Gentles S."/>
            <person name="Hamlin N."/>
            <person name="Hunt S."/>
            <person name="Jagels K."/>
            <person name="Lye G."/>
            <person name="Moule S."/>
            <person name="Odell C."/>
            <person name="Pearson D."/>
            <person name="Rajandream M.A."/>
            <person name="Rice P."/>
            <person name="Skelton J."/>
            <person name="Walsh S.V."/>
            <person name="Whitehead S."/>
            <person name="Barrell B.G."/>
        </authorList>
    </citation>
    <scope>NUCLEOTIDE SEQUENCE [LARGE SCALE GENOMIC DNA]</scope>
    <source>
        <strain>ATCC 204508 / S288c</strain>
    </source>
</reference>
<reference key="2">
    <citation type="journal article" date="2014" name="G3 (Bethesda)">
        <title>The reference genome sequence of Saccharomyces cerevisiae: Then and now.</title>
        <authorList>
            <person name="Engel S.R."/>
            <person name="Dietrich F.S."/>
            <person name="Fisk D.G."/>
            <person name="Binkley G."/>
            <person name="Balakrishnan R."/>
            <person name="Costanzo M.C."/>
            <person name="Dwight S.S."/>
            <person name="Hitz B.C."/>
            <person name="Karra K."/>
            <person name="Nash R.S."/>
            <person name="Weng S."/>
            <person name="Wong E.D."/>
            <person name="Lloyd P."/>
            <person name="Skrzypek M.S."/>
            <person name="Miyasato S.R."/>
            <person name="Simison M."/>
            <person name="Cherry J.M."/>
        </authorList>
    </citation>
    <scope>GENOME REANNOTATION</scope>
    <source>
        <strain>ATCC 204508 / S288c</strain>
    </source>
</reference>
<reference key="3">
    <citation type="journal article" date="1991" name="FEBS Lett.">
        <title>Extended N-terminal sequencing of proteins of the large ribosomal subunit from yeast mitochondria.</title>
        <authorList>
            <person name="Grohmann L."/>
            <person name="Graack H.-R."/>
            <person name="Kruft V."/>
            <person name="Choli T."/>
            <person name="Goldschmidt-Reisin S."/>
            <person name="Kitakawa M."/>
        </authorList>
    </citation>
    <scope>PROTEIN SEQUENCE OF 2-50</scope>
    <scope>SUBUNIT</scope>
    <source>
        <strain>07173</strain>
    </source>
</reference>
<reference key="4">
    <citation type="journal article" date="2003" name="Nature">
        <title>Global analysis of protein localization in budding yeast.</title>
        <authorList>
            <person name="Huh W.-K."/>
            <person name="Falvo J.V."/>
            <person name="Gerke L.C."/>
            <person name="Carroll A.S."/>
            <person name="Howson R.W."/>
            <person name="Weissman J.S."/>
            <person name="O'Shea E.K."/>
        </authorList>
    </citation>
    <scope>SUBCELLULAR LOCATION [LARGE SCALE ANALYSIS]</scope>
</reference>
<reference key="5">
    <citation type="journal article" date="2003" name="Nature">
        <title>Global analysis of protein expression in yeast.</title>
        <authorList>
            <person name="Ghaemmaghami S."/>
            <person name="Huh W.-K."/>
            <person name="Bower K."/>
            <person name="Howson R.W."/>
            <person name="Belle A."/>
            <person name="Dephoure N."/>
            <person name="O'Shea E.K."/>
            <person name="Weissman J.S."/>
        </authorList>
    </citation>
    <scope>LEVEL OF PROTEIN EXPRESSION [LARGE SCALE ANALYSIS]</scope>
</reference>
<reference key="6">
    <citation type="journal article" date="2006" name="J. Proteome Res.">
        <title>Toward the complete yeast mitochondrial proteome: multidimensional separation techniques for mitochondrial proteomics.</title>
        <authorList>
            <person name="Reinders J."/>
            <person name="Zahedi R.P."/>
            <person name="Pfanner N."/>
            <person name="Meisinger C."/>
            <person name="Sickmann A."/>
        </authorList>
    </citation>
    <scope>SUBCELLULAR LOCATION [LARGE SCALE ANALYSIS]</scope>
    <scope>IDENTIFICATION BY MASS SPECTROMETRY</scope>
</reference>
<reference key="7">
    <citation type="journal article" date="2015" name="Nat. Commun.">
        <title>Organization of the mitochondrial translation machinery studied in situ by cryoelectron tomography.</title>
        <authorList>
            <person name="Pfeffer S."/>
            <person name="Woellhaf M.W."/>
            <person name="Herrmann J.M."/>
            <person name="Forster F."/>
        </authorList>
    </citation>
    <scope>SUBCELLULAR LOCATION</scope>
</reference>
<reference key="8">
    <citation type="journal article" date="2014" name="Science">
        <title>Structure of the yeast mitochondrial large ribosomal subunit.</title>
        <authorList>
            <person name="Amunts A."/>
            <person name="Brown A."/>
            <person name="Bai X.C."/>
            <person name="Llacer J.L."/>
            <person name="Hussain T."/>
            <person name="Emsley P."/>
            <person name="Long F."/>
            <person name="Murshudov G."/>
            <person name="Scheres S.H."/>
            <person name="Ramakrishnan V."/>
        </authorList>
    </citation>
    <scope>STRUCTURE BY ELECTRON MICROSCOPY (3.20 ANGSTROMS)</scope>
    <scope>SUBUNIT</scope>
</reference>
<keyword id="KW-0002">3D-structure</keyword>
<keyword id="KW-0903">Direct protein sequencing</keyword>
<keyword id="KW-0496">Mitochondrion</keyword>
<keyword id="KW-1185">Reference proteome</keyword>
<keyword id="KW-0687">Ribonucleoprotein</keyword>
<keyword id="KW-0689">Ribosomal protein</keyword>
<name>RM39_YEAST</name>
<feature type="initiator methionine" description="Removed" evidence="4">
    <location>
        <position position="1"/>
    </location>
</feature>
<feature type="chain" id="PRO_0000087693" description="Large ribosomal subunit protein bL33m">
    <location>
        <begin position="2"/>
        <end position="70"/>
    </location>
</feature>
<feature type="sequence conflict" description="In Ref. 3; AA sequence." evidence="8" ref="3">
    <original>K</original>
    <variation>R</variation>
    <location>
        <position position="29"/>
    </location>
</feature>
<feature type="sequence conflict" description="In Ref. 3; AA sequence." evidence="8" ref="3">
    <original>R</original>
    <variation>K</variation>
    <location>
        <position position="38"/>
    </location>
</feature>
<feature type="sequence conflict" description="In Ref. 3; AA sequence." evidence="8" ref="3">
    <original>V</original>
    <variation>R</variation>
    <location>
        <position position="47"/>
    </location>
</feature>
<dbReference type="EMBL" id="Z49810">
    <property type="protein sequence ID" value="CAA89943.1"/>
    <property type="molecule type" value="Genomic_DNA"/>
</dbReference>
<dbReference type="EMBL" id="BK006946">
    <property type="protein sequence ID" value="DAA09889.1"/>
    <property type="molecule type" value="Genomic_DNA"/>
</dbReference>
<dbReference type="PIR" id="S55110">
    <property type="entry name" value="S55110"/>
</dbReference>
<dbReference type="RefSeq" id="NP_013705.1">
    <property type="nucleotide sequence ID" value="NM_001182364.1"/>
</dbReference>
<dbReference type="PDB" id="3J6B">
    <property type="method" value="EM"/>
    <property type="resolution" value="3.20 A"/>
    <property type="chains" value="X=1-70"/>
</dbReference>
<dbReference type="PDB" id="5MRC">
    <property type="method" value="EM"/>
    <property type="resolution" value="3.25 A"/>
    <property type="chains" value="X=6-69"/>
</dbReference>
<dbReference type="PDB" id="5MRE">
    <property type="method" value="EM"/>
    <property type="resolution" value="3.75 A"/>
    <property type="chains" value="X=6-69"/>
</dbReference>
<dbReference type="PDB" id="5MRF">
    <property type="method" value="EM"/>
    <property type="resolution" value="4.97 A"/>
    <property type="chains" value="X=6-69"/>
</dbReference>
<dbReference type="PDBsum" id="3J6B"/>
<dbReference type="PDBsum" id="5MRC"/>
<dbReference type="PDBsum" id="5MRE"/>
<dbReference type="PDBsum" id="5MRF"/>
<dbReference type="EMDB" id="EMD-3551"/>
<dbReference type="EMDB" id="EMD-3552"/>
<dbReference type="EMDB" id="EMD-3553"/>
<dbReference type="SMR" id="P36533"/>
<dbReference type="BioGRID" id="35160">
    <property type="interactions" value="177"/>
</dbReference>
<dbReference type="ComplexPortal" id="CPX-1602">
    <property type="entry name" value="54S mitochondrial large ribosomal subunit"/>
</dbReference>
<dbReference type="DIP" id="DIP-6836N"/>
<dbReference type="FunCoup" id="P36533">
    <property type="interactions" value="370"/>
</dbReference>
<dbReference type="IntAct" id="P36533">
    <property type="interactions" value="62"/>
</dbReference>
<dbReference type="STRING" id="4932.YML009C"/>
<dbReference type="PaxDb" id="4932-YML009C"/>
<dbReference type="PeptideAtlas" id="P36533"/>
<dbReference type="EnsemblFungi" id="YML009C_mRNA">
    <property type="protein sequence ID" value="YML009C"/>
    <property type="gene ID" value="YML009C"/>
</dbReference>
<dbReference type="GeneID" id="855002"/>
<dbReference type="KEGG" id="sce:YML009C"/>
<dbReference type="AGR" id="SGD:S000004468"/>
<dbReference type="SGD" id="S000004468">
    <property type="gene designation" value="MRPL39"/>
</dbReference>
<dbReference type="VEuPathDB" id="FungiDB:YML009C"/>
<dbReference type="eggNOG" id="KOG3505">
    <property type="taxonomic scope" value="Eukaryota"/>
</dbReference>
<dbReference type="HOGENOM" id="CLU_190949_1_2_1"/>
<dbReference type="InParanoid" id="P36533"/>
<dbReference type="OMA" id="TQVRYDP"/>
<dbReference type="OrthoDB" id="275534at2759"/>
<dbReference type="BioCyc" id="YEAST:G3O-32613-MONOMER"/>
<dbReference type="BioGRID-ORCS" id="855002">
    <property type="hits" value="0 hits in 10 CRISPR screens"/>
</dbReference>
<dbReference type="PRO" id="PR:P36533"/>
<dbReference type="Proteomes" id="UP000002311">
    <property type="component" value="Chromosome XIII"/>
</dbReference>
<dbReference type="RNAct" id="P36533">
    <property type="molecule type" value="protein"/>
</dbReference>
<dbReference type="GO" id="GO:0005743">
    <property type="term" value="C:mitochondrial inner membrane"/>
    <property type="evidence" value="ECO:0000303"/>
    <property type="project" value="ComplexPortal"/>
</dbReference>
<dbReference type="GO" id="GO:0005762">
    <property type="term" value="C:mitochondrial large ribosomal subunit"/>
    <property type="evidence" value="ECO:0000314"/>
    <property type="project" value="SGD"/>
</dbReference>
<dbReference type="GO" id="GO:0005739">
    <property type="term" value="C:mitochondrion"/>
    <property type="evidence" value="ECO:0007005"/>
    <property type="project" value="SGD"/>
</dbReference>
<dbReference type="GO" id="GO:0003735">
    <property type="term" value="F:structural constituent of ribosome"/>
    <property type="evidence" value="ECO:0000314"/>
    <property type="project" value="SGD"/>
</dbReference>
<dbReference type="GO" id="GO:0032543">
    <property type="term" value="P:mitochondrial translation"/>
    <property type="evidence" value="ECO:0000303"/>
    <property type="project" value="ComplexPortal"/>
</dbReference>
<dbReference type="FunFam" id="2.20.28.120:FF:000011">
    <property type="entry name" value="Mrpl39p"/>
    <property type="match status" value="1"/>
</dbReference>
<dbReference type="Gene3D" id="2.20.28.120">
    <property type="entry name" value="Ribosomal protein L33"/>
    <property type="match status" value="1"/>
</dbReference>
<dbReference type="InterPro" id="IPR052008">
    <property type="entry name" value="Mitoribosomal_protein_bL33"/>
</dbReference>
<dbReference type="InterPro" id="IPR001705">
    <property type="entry name" value="Ribosomal_bL33"/>
</dbReference>
<dbReference type="InterPro" id="IPR038584">
    <property type="entry name" value="Ribosomal_bL33_sf"/>
</dbReference>
<dbReference type="InterPro" id="IPR011332">
    <property type="entry name" value="Ribosomal_zn-bd"/>
</dbReference>
<dbReference type="NCBIfam" id="TIGR01023">
    <property type="entry name" value="rpmG_bact"/>
    <property type="match status" value="1"/>
</dbReference>
<dbReference type="PANTHER" id="PTHR47037">
    <property type="entry name" value="39S RIBOSOMAL PROTEIN L33, MITOCHONDRIAL"/>
    <property type="match status" value="1"/>
</dbReference>
<dbReference type="PANTHER" id="PTHR47037:SF1">
    <property type="entry name" value="LARGE RIBOSOMAL SUBUNIT PROTEIN BL33M"/>
    <property type="match status" value="1"/>
</dbReference>
<dbReference type="SUPFAM" id="SSF57829">
    <property type="entry name" value="Zn-binding ribosomal proteins"/>
    <property type="match status" value="1"/>
</dbReference>